<evidence type="ECO:0000305" key="1"/>
<accession>Q83IW8</accession>
<reference key="1">
    <citation type="journal article" date="2002" name="Nucleic Acids Res.">
        <title>Genome sequence of Shigella flexneri 2a: insights into pathogenicity through comparison with genomes of Escherichia coli K12 and O157.</title>
        <authorList>
            <person name="Jin Q."/>
            <person name="Yuan Z."/>
            <person name="Xu J."/>
            <person name="Wang Y."/>
            <person name="Shen Y."/>
            <person name="Lu W."/>
            <person name="Wang J."/>
            <person name="Liu H."/>
            <person name="Yang J."/>
            <person name="Yang F."/>
            <person name="Zhang X."/>
            <person name="Zhang J."/>
            <person name="Yang G."/>
            <person name="Wu H."/>
            <person name="Qu D."/>
            <person name="Dong J."/>
            <person name="Sun L."/>
            <person name="Xue Y."/>
            <person name="Zhao A."/>
            <person name="Gao Y."/>
            <person name="Zhu J."/>
            <person name="Kan B."/>
            <person name="Ding K."/>
            <person name="Chen S."/>
            <person name="Cheng H."/>
            <person name="Yao Z."/>
            <person name="He B."/>
            <person name="Chen R."/>
            <person name="Ma D."/>
            <person name="Qiang B."/>
            <person name="Wen Y."/>
            <person name="Hou Y."/>
            <person name="Yu J."/>
        </authorList>
    </citation>
    <scope>NUCLEOTIDE SEQUENCE [LARGE SCALE GENOMIC DNA]</scope>
    <source>
        <strain>301 / Serotype 2a</strain>
    </source>
</reference>
<reference key="2">
    <citation type="journal article" date="2003" name="Infect. Immun.">
        <title>Complete genome sequence and comparative genomics of Shigella flexneri serotype 2a strain 2457T.</title>
        <authorList>
            <person name="Wei J."/>
            <person name="Goldberg M.B."/>
            <person name="Burland V."/>
            <person name="Venkatesan M.M."/>
            <person name="Deng W."/>
            <person name="Fournier G."/>
            <person name="Mayhew G.F."/>
            <person name="Plunkett G. III"/>
            <person name="Rose D.J."/>
            <person name="Darling A."/>
            <person name="Mau B."/>
            <person name="Perna N.T."/>
            <person name="Payne S.M."/>
            <person name="Runyen-Janecky L.J."/>
            <person name="Zhou S."/>
            <person name="Schwartz D.C."/>
            <person name="Blattner F.R."/>
        </authorList>
    </citation>
    <scope>NUCLEOTIDE SEQUENCE [LARGE SCALE GENOMIC DNA]</scope>
    <source>
        <strain>ATCC 700930 / 2457T / Serotype 2a</strain>
    </source>
</reference>
<gene>
    <name type="primary">yigA</name>
    <name type="ordered locus">SF3888</name>
    <name type="ordered locus">S3868</name>
</gene>
<proteinExistence type="predicted"/>
<sequence>MKQPGEELQETLTELDDRAVVDYLIKNPEFFIRNARAVEAIRVPHPVRGTISLVEWHMARARNHIHVLEENMALLMEQAIANEGLFYRLLYLQRSLTAASSLDDMLMRFHRWARDLGLAGASLRLFPDRWRLGAPSNHTHLALSRQSFEPLRIQRLGQEQHYLGPLNGPELLVVLPEAKAVGSVAMSMLGSDADLGVVLFTSRDASHYQQGQGTQLLHEIALMLPELLERWIERV</sequence>
<organism>
    <name type="scientific">Shigella flexneri</name>
    <dbReference type="NCBI Taxonomy" id="623"/>
    <lineage>
        <taxon>Bacteria</taxon>
        <taxon>Pseudomonadati</taxon>
        <taxon>Pseudomonadota</taxon>
        <taxon>Gammaproteobacteria</taxon>
        <taxon>Enterobacterales</taxon>
        <taxon>Enterobacteriaceae</taxon>
        <taxon>Shigella</taxon>
    </lineage>
</organism>
<dbReference type="EMBL" id="AE005674">
    <property type="protein sequence ID" value="AAN45324.1"/>
    <property type="molecule type" value="Genomic_DNA"/>
</dbReference>
<dbReference type="EMBL" id="AE014073">
    <property type="protein sequence ID" value="AAP18876.1"/>
    <property type="molecule type" value="Genomic_DNA"/>
</dbReference>
<dbReference type="RefSeq" id="NP_709617.1">
    <property type="nucleotide sequence ID" value="NC_004337.2"/>
</dbReference>
<dbReference type="RefSeq" id="WP_000812784.1">
    <property type="nucleotide sequence ID" value="NZ_CP123365.1"/>
</dbReference>
<dbReference type="SMR" id="Q83IW8"/>
<dbReference type="STRING" id="198214.SF3888"/>
<dbReference type="PaxDb" id="198214-SF3888"/>
<dbReference type="GeneID" id="1026870"/>
<dbReference type="KEGG" id="sfl:SF3888"/>
<dbReference type="KEGG" id="sfx:S3868"/>
<dbReference type="PATRIC" id="fig|198214.7.peg.4585"/>
<dbReference type="HOGENOM" id="CLU_073320_0_0_6"/>
<dbReference type="Proteomes" id="UP000001006">
    <property type="component" value="Chromosome"/>
</dbReference>
<dbReference type="Proteomes" id="UP000002673">
    <property type="component" value="Chromosome"/>
</dbReference>
<dbReference type="Gene3D" id="3.30.450.40">
    <property type="match status" value="1"/>
</dbReference>
<dbReference type="InterPro" id="IPR007435">
    <property type="entry name" value="DUF484"/>
</dbReference>
<dbReference type="InterPro" id="IPR029016">
    <property type="entry name" value="GAF-like_dom_sf"/>
</dbReference>
<dbReference type="NCBIfam" id="NF008203">
    <property type="entry name" value="PRK10963.1"/>
    <property type="match status" value="1"/>
</dbReference>
<dbReference type="PANTHER" id="PTHR38765">
    <property type="entry name" value="DUF484 DOMAIN-CONTAINING PROTEIN"/>
    <property type="match status" value="1"/>
</dbReference>
<dbReference type="PANTHER" id="PTHR38765:SF1">
    <property type="entry name" value="DUF484 DOMAIN-CONTAINING PROTEIN"/>
    <property type="match status" value="1"/>
</dbReference>
<dbReference type="Pfam" id="PF04340">
    <property type="entry name" value="DUF484"/>
    <property type="match status" value="1"/>
</dbReference>
<name>YIGA_SHIFL</name>
<feature type="chain" id="PRO_0000169650" description="Uncharacterized protein YigA">
    <location>
        <begin position="1"/>
        <end position="235"/>
    </location>
</feature>
<feature type="sequence conflict" description="In Ref. 2; AAP18876." evidence="1" ref="2">
    <original>I</original>
    <variation>V</variation>
    <location>
        <position position="51"/>
    </location>
</feature>
<keyword id="KW-1185">Reference proteome</keyword>
<protein>
    <recommendedName>
        <fullName>Uncharacterized protein YigA</fullName>
    </recommendedName>
</protein>